<evidence type="ECO:0000269" key="1">
    <source>
    </source>
</evidence>
<evidence type="ECO:0000305" key="2"/>
<gene>
    <name type="primary">gnrh3</name>
</gene>
<keyword id="KW-0027">Amidation</keyword>
<keyword id="KW-0903">Direct protein sequencing</keyword>
<keyword id="KW-0372">Hormone</keyword>
<keyword id="KW-0873">Pyrrolidone carboxylic acid</keyword>
<keyword id="KW-0964">Secreted</keyword>
<feature type="peptide" id="PRO_0000043955" description="Gonadoliberin-3">
    <location>
        <begin position="1"/>
        <end position="10"/>
    </location>
</feature>
<feature type="modified residue" description="Pyrrolidone carboxylic acid" evidence="1">
    <location>
        <position position="1"/>
    </location>
</feature>
<feature type="modified residue" description="Glycine amide" evidence="1">
    <location>
        <position position="10"/>
    </location>
</feature>
<comment type="function">
    <text>Stimulates the secretion of gonadotropins; it stimulates the secretion of both luteinizing and follicle-stimulating hormones.</text>
</comment>
<comment type="subcellular location">
    <subcellularLocation>
        <location>Secreted</location>
    </subcellularLocation>
</comment>
<comment type="similarity">
    <text evidence="2">Belongs to the GnRH family.</text>
</comment>
<reference key="1">
    <citation type="journal article" date="1983" name="Proc. Natl. Acad. Sci. U.S.A.">
        <title>Characterization of a teleost gonadotropin-releasing hormone.</title>
        <authorList>
            <person name="Sherwood N.M."/>
            <person name="Eiden L."/>
            <person name="Brownstein M."/>
            <person name="Spiess J."/>
            <person name="Rivier J.E."/>
            <person name="Vale W."/>
        </authorList>
    </citation>
    <scope>PROTEIN SEQUENCE</scope>
    <scope>PYROGLUTAMATE FORMATION AT GLN-1</scope>
    <scope>AMIDATION AT GLY-10</scope>
</reference>
<sequence length="10" mass="1230">QHWSYGWLPG</sequence>
<accession>P69105</accession>
<accession>P20367</accession>
<accession>P81751</accession>
<organism>
    <name type="scientific">Oncorhynchus keta</name>
    <name type="common">Chum salmon</name>
    <name type="synonym">Salmo keta</name>
    <dbReference type="NCBI Taxonomy" id="8018"/>
    <lineage>
        <taxon>Eukaryota</taxon>
        <taxon>Metazoa</taxon>
        <taxon>Chordata</taxon>
        <taxon>Craniata</taxon>
        <taxon>Vertebrata</taxon>
        <taxon>Euteleostomi</taxon>
        <taxon>Actinopterygii</taxon>
        <taxon>Neopterygii</taxon>
        <taxon>Teleostei</taxon>
        <taxon>Protacanthopterygii</taxon>
        <taxon>Salmoniformes</taxon>
        <taxon>Salmonidae</taxon>
        <taxon>Salmoninae</taxon>
        <taxon>Oncorhynchus</taxon>
    </lineage>
</organism>
<protein>
    <recommendedName>
        <fullName>Gonadoliberin-3</fullName>
    </recommendedName>
    <alternativeName>
        <fullName>Gonadoliberin III</fullName>
    </alternativeName>
    <alternativeName>
        <fullName>Gonadotropin-releasing hormone III</fullName>
        <shortName>GnRH-III</shortName>
    </alternativeName>
    <alternativeName>
        <fullName>Luliberin III</fullName>
    </alternativeName>
    <alternativeName>
        <fullName>Luteinizing hormone-releasing hormone III</fullName>
        <shortName>LH-RH III</shortName>
    </alternativeName>
</protein>
<proteinExistence type="evidence at protein level"/>
<dbReference type="PIR" id="A21114">
    <property type="entry name" value="A21114"/>
</dbReference>
<dbReference type="GO" id="GO:0005576">
    <property type="term" value="C:extracellular region"/>
    <property type="evidence" value="ECO:0007669"/>
    <property type="project" value="UniProtKB-SubCell"/>
</dbReference>
<dbReference type="GO" id="GO:0005179">
    <property type="term" value="F:hormone activity"/>
    <property type="evidence" value="ECO:0007669"/>
    <property type="project" value="UniProtKB-KW"/>
</dbReference>
<dbReference type="InterPro" id="IPR002012">
    <property type="entry name" value="GnRH"/>
</dbReference>
<dbReference type="Pfam" id="PF00446">
    <property type="entry name" value="GnRH"/>
    <property type="match status" value="1"/>
</dbReference>
<dbReference type="PROSITE" id="PS00473">
    <property type="entry name" value="GNRH"/>
    <property type="match status" value="1"/>
</dbReference>
<name>GON3_ONCKE</name>